<dbReference type="EMBL" id="AF435932">
    <property type="protein sequence ID" value="AAL35566.1"/>
    <property type="molecule type" value="Genomic_DNA"/>
</dbReference>
<dbReference type="GO" id="GO:0000786">
    <property type="term" value="C:nucleosome"/>
    <property type="evidence" value="ECO:0007669"/>
    <property type="project" value="UniProtKB-KW"/>
</dbReference>
<dbReference type="GO" id="GO:0005634">
    <property type="term" value="C:nucleus"/>
    <property type="evidence" value="ECO:0007669"/>
    <property type="project" value="UniProtKB-SubCell"/>
</dbReference>
<dbReference type="GO" id="GO:0003677">
    <property type="term" value="F:DNA binding"/>
    <property type="evidence" value="ECO:0007669"/>
    <property type="project" value="UniProtKB-KW"/>
</dbReference>
<dbReference type="GO" id="GO:0030261">
    <property type="term" value="P:chromosome condensation"/>
    <property type="evidence" value="ECO:0007669"/>
    <property type="project" value="UniProtKB-KW"/>
</dbReference>
<dbReference type="GO" id="GO:0035092">
    <property type="term" value="P:sperm DNA condensation"/>
    <property type="evidence" value="ECO:0007669"/>
    <property type="project" value="InterPro"/>
</dbReference>
<dbReference type="InterPro" id="IPR000221">
    <property type="entry name" value="Protamine_P1"/>
</dbReference>
<dbReference type="Pfam" id="PF00260">
    <property type="entry name" value="Protamine_P1"/>
    <property type="match status" value="1"/>
</dbReference>
<dbReference type="PROSITE" id="PS00048">
    <property type="entry name" value="PROTAMINE_P1"/>
    <property type="match status" value="1"/>
</dbReference>
<protein>
    <recommendedName>
        <fullName>Sperm protamine P1</fullName>
    </recommendedName>
</protein>
<accession>Q7JH07</accession>
<proteinExistence type="evidence at transcript level"/>
<organism>
    <name type="scientific">Pteronotus parnellii</name>
    <name type="common">Parnell's mustached bat</name>
    <dbReference type="NCBI Taxonomy" id="59476"/>
    <lineage>
        <taxon>Eukaryota</taxon>
        <taxon>Metazoa</taxon>
        <taxon>Chordata</taxon>
        <taxon>Craniata</taxon>
        <taxon>Vertebrata</taxon>
        <taxon>Euteleostomi</taxon>
        <taxon>Mammalia</taxon>
        <taxon>Eutheria</taxon>
        <taxon>Laurasiatheria</taxon>
        <taxon>Chiroptera</taxon>
        <taxon>Yangochiroptera</taxon>
        <taxon>Mormoopidae</taxon>
        <taxon>Pteronotus</taxon>
    </lineage>
</organism>
<comment type="function">
    <text evidence="1">Protamines substitute for histones in the chromatin of sperm during the haploid phase of spermatogenesis. They compact sperm DNA into a highly condensed, stable and inactive complex (By similarity).</text>
</comment>
<comment type="subcellular location">
    <subcellularLocation>
        <location evidence="1">Nucleus</location>
    </subcellularLocation>
    <subcellularLocation>
        <location evidence="1">Chromosome</location>
    </subcellularLocation>
</comment>
<comment type="tissue specificity">
    <text>Testis.</text>
</comment>
<comment type="similarity">
    <text evidence="2">Belongs to the protamine P1 family.</text>
</comment>
<keyword id="KW-0158">Chromosome</keyword>
<keyword id="KW-0217">Developmental protein</keyword>
<keyword id="KW-0221">Differentiation</keyword>
<keyword id="KW-0226">DNA condensation</keyword>
<keyword id="KW-0238">DNA-binding</keyword>
<keyword id="KW-0544">Nucleosome core</keyword>
<keyword id="KW-0539">Nucleus</keyword>
<keyword id="KW-0744">Spermatogenesis</keyword>
<reference key="1">
    <citation type="journal article" date="2002" name="Mol. Phylogenet. Evol.">
        <title>Characterization and phylogenetic utility of the mammalian protamine P1 gene.</title>
        <authorList>
            <person name="Van Den Bussche R.A."/>
            <person name="Hoofer S.R."/>
            <person name="Hansen E.W."/>
        </authorList>
    </citation>
    <scope>NUCLEOTIDE SEQUENCE [GENOMIC DNA]</scope>
</reference>
<evidence type="ECO:0000250" key="1"/>
<evidence type="ECO:0000305" key="2"/>
<gene>
    <name type="primary">PRM1</name>
</gene>
<feature type="chain" id="PRO_0000191547" description="Sperm protamine P1">
    <location>
        <begin position="1"/>
        <end position="48"/>
    </location>
</feature>
<name>HSP1_PTEPA</name>
<sequence length="48" mass="6506">MARYRCCRSPSRSRCRRRRRRCRRRRRRCCRRRRRVCCRRYTVRCRRR</sequence>